<keyword id="KW-0067">ATP-binding</keyword>
<keyword id="KW-0436">Ligase</keyword>
<keyword id="KW-0547">Nucleotide-binding</keyword>
<keyword id="KW-0554">One-carbon metabolism</keyword>
<dbReference type="EC" id="6.3.4.3" evidence="1"/>
<dbReference type="EMBL" id="CP000003">
    <property type="protein sequence ID" value="AAT87906.1"/>
    <property type="molecule type" value="Genomic_DNA"/>
</dbReference>
<dbReference type="RefSeq" id="WP_011185044.1">
    <property type="nucleotide sequence ID" value="NC_006086.1"/>
</dbReference>
<dbReference type="SMR" id="Q5X9K7"/>
<dbReference type="KEGG" id="spa:M6_Spy1771"/>
<dbReference type="HOGENOM" id="CLU_003601_3_3_9"/>
<dbReference type="UniPathway" id="UPA00193"/>
<dbReference type="Proteomes" id="UP000001167">
    <property type="component" value="Chromosome"/>
</dbReference>
<dbReference type="GO" id="GO:0005524">
    <property type="term" value="F:ATP binding"/>
    <property type="evidence" value="ECO:0007669"/>
    <property type="project" value="UniProtKB-UniRule"/>
</dbReference>
<dbReference type="GO" id="GO:0004329">
    <property type="term" value="F:formate-tetrahydrofolate ligase activity"/>
    <property type="evidence" value="ECO:0007669"/>
    <property type="project" value="UniProtKB-UniRule"/>
</dbReference>
<dbReference type="GO" id="GO:0035999">
    <property type="term" value="P:tetrahydrofolate interconversion"/>
    <property type="evidence" value="ECO:0007669"/>
    <property type="project" value="UniProtKB-UniRule"/>
</dbReference>
<dbReference type="CDD" id="cd00477">
    <property type="entry name" value="FTHFS"/>
    <property type="match status" value="1"/>
</dbReference>
<dbReference type="FunFam" id="3.30.1510.10:FF:000001">
    <property type="entry name" value="Formate--tetrahydrofolate ligase"/>
    <property type="match status" value="1"/>
</dbReference>
<dbReference type="FunFam" id="3.10.410.10:FF:000001">
    <property type="entry name" value="Putative formate--tetrahydrofolate ligase"/>
    <property type="match status" value="1"/>
</dbReference>
<dbReference type="Gene3D" id="3.30.1510.10">
    <property type="entry name" value="Domain 2, N(10)-formyltetrahydrofolate synthetase"/>
    <property type="match status" value="1"/>
</dbReference>
<dbReference type="Gene3D" id="3.10.410.10">
    <property type="entry name" value="Formyltetrahydrofolate synthetase, domain 3"/>
    <property type="match status" value="1"/>
</dbReference>
<dbReference type="Gene3D" id="3.40.50.300">
    <property type="entry name" value="P-loop containing nucleotide triphosphate hydrolases"/>
    <property type="match status" value="1"/>
</dbReference>
<dbReference type="HAMAP" id="MF_01543">
    <property type="entry name" value="FTHFS"/>
    <property type="match status" value="1"/>
</dbReference>
<dbReference type="InterPro" id="IPR000559">
    <property type="entry name" value="Formate_THF_ligase"/>
</dbReference>
<dbReference type="InterPro" id="IPR020628">
    <property type="entry name" value="Formate_THF_ligase_CS"/>
</dbReference>
<dbReference type="InterPro" id="IPR027417">
    <property type="entry name" value="P-loop_NTPase"/>
</dbReference>
<dbReference type="NCBIfam" id="NF010030">
    <property type="entry name" value="PRK13505.1"/>
    <property type="match status" value="1"/>
</dbReference>
<dbReference type="Pfam" id="PF01268">
    <property type="entry name" value="FTHFS"/>
    <property type="match status" value="1"/>
</dbReference>
<dbReference type="SUPFAM" id="SSF52540">
    <property type="entry name" value="P-loop containing nucleoside triphosphate hydrolases"/>
    <property type="match status" value="1"/>
</dbReference>
<dbReference type="PROSITE" id="PS00721">
    <property type="entry name" value="FTHFS_1"/>
    <property type="match status" value="1"/>
</dbReference>
<dbReference type="PROSITE" id="PS00722">
    <property type="entry name" value="FTHFS_2"/>
    <property type="match status" value="1"/>
</dbReference>
<feature type="chain" id="PRO_0000199398" description="Formate--tetrahydrofolate ligase 2">
    <location>
        <begin position="1"/>
        <end position="557"/>
    </location>
</feature>
<feature type="binding site" evidence="1">
    <location>
        <begin position="66"/>
        <end position="73"/>
    </location>
    <ligand>
        <name>ATP</name>
        <dbReference type="ChEBI" id="CHEBI:30616"/>
    </ligand>
</feature>
<reference key="1">
    <citation type="journal article" date="2004" name="J. Infect. Dis.">
        <title>Progress toward characterization of the group A Streptococcus metagenome: complete genome sequence of a macrolide-resistant serotype M6 strain.</title>
        <authorList>
            <person name="Banks D.J."/>
            <person name="Porcella S.F."/>
            <person name="Barbian K.D."/>
            <person name="Beres S.B."/>
            <person name="Philips L.E."/>
            <person name="Voyich J.M."/>
            <person name="DeLeo F.R."/>
            <person name="Martin J.M."/>
            <person name="Somerville G.A."/>
            <person name="Musser J.M."/>
        </authorList>
    </citation>
    <scope>NUCLEOTIDE SEQUENCE [LARGE SCALE GENOMIC DNA]</scope>
    <source>
        <strain>ATCC BAA-946 / MGAS10394</strain>
    </source>
</reference>
<organism>
    <name type="scientific">Streptococcus pyogenes serotype M6 (strain ATCC BAA-946 / MGAS10394)</name>
    <dbReference type="NCBI Taxonomy" id="286636"/>
    <lineage>
        <taxon>Bacteria</taxon>
        <taxon>Bacillati</taxon>
        <taxon>Bacillota</taxon>
        <taxon>Bacilli</taxon>
        <taxon>Lactobacillales</taxon>
        <taxon>Streptococcaceae</taxon>
        <taxon>Streptococcus</taxon>
    </lineage>
</organism>
<sequence>MVLSDIEIANSVTMEPISKVADQLGIDKETLCLYGKYKAKIDARQLVALKDKPDGKLILVTAISPTPAGEGKTTTSVGLVDALSAIGKKAVIALREPSLGPVFGVKGGAAGGGHAQVVPMEDINLHFTGDFHAIGVANNLLAALIDNHIHHGNSLGIDSRRITWKRVVDMNDRQLRHIVDGLQGKVNGVPREDGYDITVASEIMAILCLSENISDLKARLEKIIIGYNFQGEPVTAKDLKAGGALAALLKDAIHPNLVQTLEHTPALIHGGPFANIAHGCNSVLATKLALKYGDYAVTEAGFGADLGAEKFIDIKCRMSGLRPAAVVLVATIRALKMHGGVPKADLATENVQAVVDGLPNLDKHLANIQDVYGLPVVVAINKFPLDTDAELQAVYDACDKRGVDVVISDVWANGGAGGRELAEKVVALAEQDNQFRFVYNEDDSIETKLTKIVTKIYGGKGIKLTPTAKRELAELERLGFGNYPICMAKTQYSFSDDAKKLGAPTDFIVTISNLKVSAGAGFIVALTGAIMTMPGLPKVPASETIDIDEEGNITGLF</sequence>
<name>FTHS2_STRP6</name>
<comment type="catalytic activity">
    <reaction evidence="1">
        <text>(6S)-5,6,7,8-tetrahydrofolate + formate + ATP = (6R)-10-formyltetrahydrofolate + ADP + phosphate</text>
        <dbReference type="Rhea" id="RHEA:20221"/>
        <dbReference type="ChEBI" id="CHEBI:15740"/>
        <dbReference type="ChEBI" id="CHEBI:30616"/>
        <dbReference type="ChEBI" id="CHEBI:43474"/>
        <dbReference type="ChEBI" id="CHEBI:57453"/>
        <dbReference type="ChEBI" id="CHEBI:195366"/>
        <dbReference type="ChEBI" id="CHEBI:456216"/>
        <dbReference type="EC" id="6.3.4.3"/>
    </reaction>
</comment>
<comment type="pathway">
    <text evidence="1">One-carbon metabolism; tetrahydrofolate interconversion.</text>
</comment>
<comment type="similarity">
    <text evidence="1">Belongs to the formate--tetrahydrofolate ligase family.</text>
</comment>
<accession>Q5X9K7</accession>
<protein>
    <recommendedName>
        <fullName evidence="1">Formate--tetrahydrofolate ligase 2</fullName>
        <ecNumber evidence="1">6.3.4.3</ecNumber>
    </recommendedName>
    <alternativeName>
        <fullName evidence="1">Formyltetrahydrofolate synthetase 2</fullName>
        <shortName evidence="1">FHS 2</shortName>
        <shortName evidence="1">FTHFS 2</shortName>
    </alternativeName>
</protein>
<evidence type="ECO:0000255" key="1">
    <source>
        <dbReference type="HAMAP-Rule" id="MF_01543"/>
    </source>
</evidence>
<proteinExistence type="inferred from homology"/>
<gene>
    <name evidence="1" type="primary">fhs2</name>
    <name type="ordered locus">M6_Spy1771</name>
</gene>